<proteinExistence type="inferred from homology"/>
<keyword id="KW-0004">4Fe-4S</keyword>
<keyword id="KW-0963">Cytoplasm</keyword>
<keyword id="KW-0408">Iron</keyword>
<keyword id="KW-0411">Iron-sulfur</keyword>
<keyword id="KW-0479">Metal-binding</keyword>
<keyword id="KW-0949">S-adenosyl-L-methionine</keyword>
<keyword id="KW-0808">Transferase</keyword>
<keyword id="KW-0819">tRNA processing</keyword>
<accession>A7GE46</accession>
<sequence length="450" mass="51319">MNEILNTKDINTIGEFFIETWGCQMNEEDSEKLSGMLKKEGYIRTEERENADVIIFNTCCVRENAELKVYGNLGILKGLKSKNPNLIIAVTGCMMQQKGMAETIKKKFPFVDIIIGTHNLHNFPNYLNEVKKKDTSVLKIQEKEDSIIENMPIDRKNSMKAFVTIMYGCNNFCTYCIVPYVRGRERSRTPENIEAEIKKLISEGYKEITLLGQNVNSYGKDLEPNVTFAELLKRVNNIEGLERVRFMTSHPKDLTDDVIEAIAKCDKLCEQIHLPVQSGSSEILKKMNRHYDREKYLDVVSKIKKLIPNVALSTDIIVGFPGETEKDFEETLSLVKEVEYDSAFTFLYSIRKGTPAAKFEDQVPEDVKHKRFNRLVEVVNEISAKKNKAYEGKIEEVLVEGTSKNDENKLMGRTRTGKLVNFIGDKDSIGEFVNVKIIKANSFSLTGEEI</sequence>
<protein>
    <recommendedName>
        <fullName evidence="1">tRNA-2-methylthio-N(6)-dimethylallyladenosine synthase</fullName>
        <ecNumber evidence="1">2.8.4.3</ecNumber>
    </recommendedName>
    <alternativeName>
        <fullName evidence="1">(Dimethylallyl)adenosine tRNA methylthiotransferase MiaB</fullName>
    </alternativeName>
    <alternativeName>
        <fullName evidence="1">tRNA-i(6)A37 methylthiotransferase</fullName>
    </alternativeName>
</protein>
<gene>
    <name evidence="1" type="primary">miaB</name>
    <name type="ordered locus">CLI_1796</name>
</gene>
<evidence type="ECO:0000255" key="1">
    <source>
        <dbReference type="HAMAP-Rule" id="MF_01864"/>
    </source>
</evidence>
<evidence type="ECO:0000255" key="2">
    <source>
        <dbReference type="PROSITE-ProRule" id="PRU01266"/>
    </source>
</evidence>
<reference key="1">
    <citation type="submission" date="2007-06" db="EMBL/GenBank/DDBJ databases">
        <authorList>
            <person name="Brinkac L.M."/>
            <person name="Daugherty S."/>
            <person name="Dodson R.J."/>
            <person name="Madupu R."/>
            <person name="Brown J.L."/>
            <person name="Bruce D."/>
            <person name="Detter C."/>
            <person name="Munk C."/>
            <person name="Smith L.A."/>
            <person name="Smith T.J."/>
            <person name="White O."/>
            <person name="Brettin T.S."/>
        </authorList>
    </citation>
    <scope>NUCLEOTIDE SEQUENCE [LARGE SCALE GENOMIC DNA]</scope>
    <source>
        <strain>Langeland / NCTC 10281 / Type F</strain>
    </source>
</reference>
<dbReference type="EC" id="2.8.4.3" evidence="1"/>
<dbReference type="EMBL" id="CP000728">
    <property type="protein sequence ID" value="ABS42503.1"/>
    <property type="molecule type" value="Genomic_DNA"/>
</dbReference>
<dbReference type="RefSeq" id="WP_012099794.1">
    <property type="nucleotide sequence ID" value="NC_009699.1"/>
</dbReference>
<dbReference type="SMR" id="A7GE46"/>
<dbReference type="KEGG" id="cbf:CLI_1796"/>
<dbReference type="HOGENOM" id="CLU_018697_2_0_9"/>
<dbReference type="Proteomes" id="UP000002410">
    <property type="component" value="Chromosome"/>
</dbReference>
<dbReference type="GO" id="GO:0005829">
    <property type="term" value="C:cytosol"/>
    <property type="evidence" value="ECO:0007669"/>
    <property type="project" value="TreeGrafter"/>
</dbReference>
<dbReference type="GO" id="GO:0051539">
    <property type="term" value="F:4 iron, 4 sulfur cluster binding"/>
    <property type="evidence" value="ECO:0007669"/>
    <property type="project" value="UniProtKB-UniRule"/>
</dbReference>
<dbReference type="GO" id="GO:0046872">
    <property type="term" value="F:metal ion binding"/>
    <property type="evidence" value="ECO:0007669"/>
    <property type="project" value="UniProtKB-KW"/>
</dbReference>
<dbReference type="GO" id="GO:0035597">
    <property type="term" value="F:N6-isopentenyladenosine methylthiotransferase activity"/>
    <property type="evidence" value="ECO:0007669"/>
    <property type="project" value="TreeGrafter"/>
</dbReference>
<dbReference type="CDD" id="cd01335">
    <property type="entry name" value="Radical_SAM"/>
    <property type="match status" value="1"/>
</dbReference>
<dbReference type="FunFam" id="3.40.50.12160:FF:000006">
    <property type="entry name" value="tRNA-2-methylthio-N(6)-dimethylallyladenosine synthase"/>
    <property type="match status" value="1"/>
</dbReference>
<dbReference type="FunFam" id="3.80.30.20:FF:000001">
    <property type="entry name" value="tRNA-2-methylthio-N(6)-dimethylallyladenosine synthase 2"/>
    <property type="match status" value="1"/>
</dbReference>
<dbReference type="Gene3D" id="3.40.50.12160">
    <property type="entry name" value="Methylthiotransferase, N-terminal domain"/>
    <property type="match status" value="1"/>
</dbReference>
<dbReference type="Gene3D" id="3.80.30.20">
    <property type="entry name" value="tm_1862 like domain"/>
    <property type="match status" value="1"/>
</dbReference>
<dbReference type="HAMAP" id="MF_01864">
    <property type="entry name" value="tRNA_metthiotr_MiaB"/>
    <property type="match status" value="1"/>
</dbReference>
<dbReference type="InterPro" id="IPR006638">
    <property type="entry name" value="Elp3/MiaA/NifB-like_rSAM"/>
</dbReference>
<dbReference type="InterPro" id="IPR005839">
    <property type="entry name" value="Methylthiotransferase"/>
</dbReference>
<dbReference type="InterPro" id="IPR020612">
    <property type="entry name" value="Methylthiotransferase_CS"/>
</dbReference>
<dbReference type="InterPro" id="IPR013848">
    <property type="entry name" value="Methylthiotransferase_N"/>
</dbReference>
<dbReference type="InterPro" id="IPR038135">
    <property type="entry name" value="Methylthiotransferase_N_sf"/>
</dbReference>
<dbReference type="InterPro" id="IPR006463">
    <property type="entry name" value="MiaB_methiolase"/>
</dbReference>
<dbReference type="InterPro" id="IPR007197">
    <property type="entry name" value="rSAM"/>
</dbReference>
<dbReference type="InterPro" id="IPR023404">
    <property type="entry name" value="rSAM_horseshoe"/>
</dbReference>
<dbReference type="InterPro" id="IPR002792">
    <property type="entry name" value="TRAM_dom"/>
</dbReference>
<dbReference type="NCBIfam" id="TIGR01574">
    <property type="entry name" value="miaB-methiolase"/>
    <property type="match status" value="1"/>
</dbReference>
<dbReference type="NCBIfam" id="TIGR00089">
    <property type="entry name" value="MiaB/RimO family radical SAM methylthiotransferase"/>
    <property type="match status" value="1"/>
</dbReference>
<dbReference type="PANTHER" id="PTHR43020">
    <property type="entry name" value="CDK5 REGULATORY SUBUNIT-ASSOCIATED PROTEIN 1"/>
    <property type="match status" value="1"/>
</dbReference>
<dbReference type="PANTHER" id="PTHR43020:SF2">
    <property type="entry name" value="MITOCHONDRIAL TRNA METHYLTHIOTRANSFERASE CDK5RAP1"/>
    <property type="match status" value="1"/>
</dbReference>
<dbReference type="Pfam" id="PF04055">
    <property type="entry name" value="Radical_SAM"/>
    <property type="match status" value="1"/>
</dbReference>
<dbReference type="Pfam" id="PF01938">
    <property type="entry name" value="TRAM"/>
    <property type="match status" value="1"/>
</dbReference>
<dbReference type="Pfam" id="PF00919">
    <property type="entry name" value="UPF0004"/>
    <property type="match status" value="1"/>
</dbReference>
<dbReference type="SFLD" id="SFLDF00273">
    <property type="entry name" value="(dimethylallyl)adenosine_tRNA"/>
    <property type="match status" value="1"/>
</dbReference>
<dbReference type="SFLD" id="SFLDG01082">
    <property type="entry name" value="B12-binding_domain_containing"/>
    <property type="match status" value="1"/>
</dbReference>
<dbReference type="SFLD" id="SFLDG01061">
    <property type="entry name" value="methylthiotransferase"/>
    <property type="match status" value="1"/>
</dbReference>
<dbReference type="SMART" id="SM00729">
    <property type="entry name" value="Elp3"/>
    <property type="match status" value="1"/>
</dbReference>
<dbReference type="SUPFAM" id="SSF102114">
    <property type="entry name" value="Radical SAM enzymes"/>
    <property type="match status" value="1"/>
</dbReference>
<dbReference type="PROSITE" id="PS51449">
    <property type="entry name" value="MTTASE_N"/>
    <property type="match status" value="1"/>
</dbReference>
<dbReference type="PROSITE" id="PS01278">
    <property type="entry name" value="MTTASE_RADICAL"/>
    <property type="match status" value="1"/>
</dbReference>
<dbReference type="PROSITE" id="PS51918">
    <property type="entry name" value="RADICAL_SAM"/>
    <property type="match status" value="1"/>
</dbReference>
<dbReference type="PROSITE" id="PS50926">
    <property type="entry name" value="TRAM"/>
    <property type="match status" value="1"/>
</dbReference>
<comment type="function">
    <text evidence="1">Catalyzes the methylthiolation of N6-(dimethylallyl)adenosine (i(6)A), leading to the formation of 2-methylthio-N6-(dimethylallyl)adenosine (ms(2)i(6)A) at position 37 in tRNAs that read codons beginning with uridine.</text>
</comment>
<comment type="catalytic activity">
    <reaction evidence="1">
        <text>N(6)-dimethylallyladenosine(37) in tRNA + (sulfur carrier)-SH + AH2 + 2 S-adenosyl-L-methionine = 2-methylsulfanyl-N(6)-dimethylallyladenosine(37) in tRNA + (sulfur carrier)-H + 5'-deoxyadenosine + L-methionine + A + S-adenosyl-L-homocysteine + 2 H(+)</text>
        <dbReference type="Rhea" id="RHEA:37067"/>
        <dbReference type="Rhea" id="RHEA-COMP:10375"/>
        <dbReference type="Rhea" id="RHEA-COMP:10376"/>
        <dbReference type="Rhea" id="RHEA-COMP:14737"/>
        <dbReference type="Rhea" id="RHEA-COMP:14739"/>
        <dbReference type="ChEBI" id="CHEBI:13193"/>
        <dbReference type="ChEBI" id="CHEBI:15378"/>
        <dbReference type="ChEBI" id="CHEBI:17319"/>
        <dbReference type="ChEBI" id="CHEBI:17499"/>
        <dbReference type="ChEBI" id="CHEBI:29917"/>
        <dbReference type="ChEBI" id="CHEBI:57844"/>
        <dbReference type="ChEBI" id="CHEBI:57856"/>
        <dbReference type="ChEBI" id="CHEBI:59789"/>
        <dbReference type="ChEBI" id="CHEBI:64428"/>
        <dbReference type="ChEBI" id="CHEBI:74415"/>
        <dbReference type="ChEBI" id="CHEBI:74417"/>
        <dbReference type="EC" id="2.8.4.3"/>
    </reaction>
</comment>
<comment type="cofactor">
    <cofactor evidence="1">
        <name>[4Fe-4S] cluster</name>
        <dbReference type="ChEBI" id="CHEBI:49883"/>
    </cofactor>
    <text evidence="1">Binds 2 [4Fe-4S] clusters. One cluster is coordinated with 3 cysteines and an exchangeable S-adenosyl-L-methionine.</text>
</comment>
<comment type="subunit">
    <text evidence="1">Monomer.</text>
</comment>
<comment type="subcellular location">
    <subcellularLocation>
        <location evidence="1">Cytoplasm</location>
    </subcellularLocation>
</comment>
<comment type="similarity">
    <text evidence="1">Belongs to the methylthiotransferase family. MiaB subfamily.</text>
</comment>
<organism>
    <name type="scientific">Clostridium botulinum (strain Langeland / NCTC 10281 / Type F)</name>
    <dbReference type="NCBI Taxonomy" id="441772"/>
    <lineage>
        <taxon>Bacteria</taxon>
        <taxon>Bacillati</taxon>
        <taxon>Bacillota</taxon>
        <taxon>Clostridia</taxon>
        <taxon>Eubacteriales</taxon>
        <taxon>Clostridiaceae</taxon>
        <taxon>Clostridium</taxon>
    </lineage>
</organism>
<name>MIAB_CLOBL</name>
<feature type="chain" id="PRO_0000374225" description="tRNA-2-methylthio-N(6)-dimethylallyladenosine synthase">
    <location>
        <begin position="1"/>
        <end position="450"/>
    </location>
</feature>
<feature type="domain" description="MTTase N-terminal" evidence="1">
    <location>
        <begin position="14"/>
        <end position="132"/>
    </location>
</feature>
<feature type="domain" description="Radical SAM core" evidence="2">
    <location>
        <begin position="155"/>
        <end position="385"/>
    </location>
</feature>
<feature type="domain" description="TRAM" evidence="1">
    <location>
        <begin position="388"/>
        <end position="450"/>
    </location>
</feature>
<feature type="binding site" evidence="1">
    <location>
        <position position="23"/>
    </location>
    <ligand>
        <name>[4Fe-4S] cluster</name>
        <dbReference type="ChEBI" id="CHEBI:49883"/>
        <label>1</label>
    </ligand>
</feature>
<feature type="binding site" evidence="1">
    <location>
        <position position="59"/>
    </location>
    <ligand>
        <name>[4Fe-4S] cluster</name>
        <dbReference type="ChEBI" id="CHEBI:49883"/>
        <label>1</label>
    </ligand>
</feature>
<feature type="binding site" evidence="1">
    <location>
        <position position="93"/>
    </location>
    <ligand>
        <name>[4Fe-4S] cluster</name>
        <dbReference type="ChEBI" id="CHEBI:49883"/>
        <label>1</label>
    </ligand>
</feature>
<feature type="binding site" evidence="1">
    <location>
        <position position="169"/>
    </location>
    <ligand>
        <name>[4Fe-4S] cluster</name>
        <dbReference type="ChEBI" id="CHEBI:49883"/>
        <label>2</label>
        <note>4Fe-4S-S-AdoMet</note>
    </ligand>
</feature>
<feature type="binding site" evidence="1">
    <location>
        <position position="173"/>
    </location>
    <ligand>
        <name>[4Fe-4S] cluster</name>
        <dbReference type="ChEBI" id="CHEBI:49883"/>
        <label>2</label>
        <note>4Fe-4S-S-AdoMet</note>
    </ligand>
</feature>
<feature type="binding site" evidence="1">
    <location>
        <position position="176"/>
    </location>
    <ligand>
        <name>[4Fe-4S] cluster</name>
        <dbReference type="ChEBI" id="CHEBI:49883"/>
        <label>2</label>
        <note>4Fe-4S-S-AdoMet</note>
    </ligand>
</feature>